<proteinExistence type="evidence at protein level"/>
<reference key="1">
    <citation type="journal article" date="2000" name="Nature">
        <title>Complete genome sequence of Pseudomonas aeruginosa PAO1, an opportunistic pathogen.</title>
        <authorList>
            <person name="Stover C.K."/>
            <person name="Pham X.-Q.T."/>
            <person name="Erwin A.L."/>
            <person name="Mizoguchi S.D."/>
            <person name="Warrener P."/>
            <person name="Hickey M.J."/>
            <person name="Brinkman F.S.L."/>
            <person name="Hufnagle W.O."/>
            <person name="Kowalik D.J."/>
            <person name="Lagrou M."/>
            <person name="Garber R.L."/>
            <person name="Goltry L."/>
            <person name="Tolentino E."/>
            <person name="Westbrock-Wadman S."/>
            <person name="Yuan Y."/>
            <person name="Brody L.L."/>
            <person name="Coulter S.N."/>
            <person name="Folger K.R."/>
            <person name="Kas A."/>
            <person name="Larbig K."/>
            <person name="Lim R.M."/>
            <person name="Smith K.A."/>
            <person name="Spencer D.H."/>
            <person name="Wong G.K.-S."/>
            <person name="Wu Z."/>
            <person name="Paulsen I.T."/>
            <person name="Reizer J."/>
            <person name="Saier M.H. Jr."/>
            <person name="Hancock R.E.W."/>
            <person name="Lory S."/>
            <person name="Olson M.V."/>
        </authorList>
    </citation>
    <scope>NUCLEOTIDE SEQUENCE [LARGE SCALE GENOMIC DNA]</scope>
    <source>
        <strain>ATCC 15692 / DSM 22644 / CIP 104116 / JCM 14847 / LMG 12228 / 1C / PRS 101 / PAO1</strain>
    </source>
</reference>
<reference key="2">
    <citation type="journal article" date="2008" name="J. Bacteriol.">
        <title>Pseudomonas aeruginosa PqsA is an anthranilate-coenzyme A ligase.</title>
        <authorList>
            <person name="Coleman J.P."/>
            <person name="Hudson L.L."/>
            <person name="McKnight S.L."/>
            <person name="Farrow J.M. III"/>
            <person name="Calfee M.W."/>
            <person name="Lindsey C.A."/>
            <person name="Pesci E.C."/>
        </authorList>
    </citation>
    <scope>FUNCTION</scope>
    <scope>CATALYTIC ACTIVITY</scope>
    <scope>BIOPHYSICOCHEMICAL PROPERTIES</scope>
    <scope>SUBUNIT</scope>
    <source>
        <strain>ATCC 15692 / DSM 22644 / CIP 104116 / JCM 14847 / LMG 12228 / 1C / PRS 101 / PAO1</strain>
    </source>
</reference>
<reference key="3">
    <citation type="journal article" date="2008" name="J. Biol. Chem.">
        <title>PqsD is responsible for the synthesis of 2,4-dihydroxyquinoline, an extracellular metabolite produced by Pseudomonas aeruginosa.</title>
        <authorList>
            <person name="Zhang Y.M."/>
            <person name="Frank M.W."/>
            <person name="Zhu K."/>
            <person name="Mayasundari A."/>
            <person name="Rock C.O."/>
        </authorList>
    </citation>
    <scope>FUNCTION</scope>
    <scope>CATALYTIC ACTIVITY</scope>
    <scope>DISRUPTION PHENOTYPE</scope>
    <source>
        <strain>ATCC 15692 / DSM 22644 / CIP 104116 / JCM 14847 / LMG 12228 / 1C / PRS 101 / PAO1</strain>
    </source>
</reference>
<sequence length="517" mass="56608">MSTLANLTEVLFRLDFDPDTAVYHYRGQTLSRLQCRTYILSQASQLARLLKPGDRVVLALNDSPSLACLFLACIAVGAIPAVINPKSREQALADIAADCQASLVVREADAPSLSGPLAPLTLRAAAGRPLLDDFSLDALVGPADLDWSAFHRQDPAAACFLQYTSGSTGAPKGVMHSLRNTLGFCRAFATELLALQAGDRLYSIPKMFFGYGMGNSLFFPWFSGASALLDDTWPSPERVLENLVAFRPRVLFGVPAIYASLRPQARELLSSVRLAFSAGSPLPRGEFEFWAAHGLEICDGIGATEVGHVFLANRPGQARADSTGLPLPGYECRLVDREGHTIEEAGRQGVLLVRGPGLSPGYWRASEEQQARFAGGWYRTGDLFERDESGAYRHCGREDDLFKVNGRWVVPTQVEQAICRHLPEVSEAVLVPTCRLHDGLRPTLFVTLATPLDDNQILLAQRIDQHLAEQIPSHMLPSQLHVLPALPRNDNGKLARAELRHLADTLYHDNLPEERAC</sequence>
<comment type="function">
    <text evidence="2 3">Catalyzes the formation of anthraniloyl-CoA, which is the priming step for entry into the Pseudomonas quinolone signal (PQS) biosynthetic pathway. Also active on a variety of aromatic substrates, including benzoate and chloro and fluoro derivatives of anthranilate.</text>
</comment>
<comment type="catalytic activity">
    <reaction evidence="2 3">
        <text>anthranilate + ATP + CoA = anthraniloyl-CoA + AMP + diphosphate</text>
        <dbReference type="Rhea" id="RHEA:10828"/>
        <dbReference type="ChEBI" id="CHEBI:16567"/>
        <dbReference type="ChEBI" id="CHEBI:30616"/>
        <dbReference type="ChEBI" id="CHEBI:33019"/>
        <dbReference type="ChEBI" id="CHEBI:57287"/>
        <dbReference type="ChEBI" id="CHEBI:57331"/>
        <dbReference type="ChEBI" id="CHEBI:456215"/>
        <dbReference type="EC" id="6.2.1.32"/>
    </reaction>
</comment>
<comment type="biophysicochemical properties">
    <kinetics>
        <KM evidence="2">3 uM for anthranilate</KM>
        <KM evidence="2">22 uM for CoA</KM>
        <KM evidence="2">71 uM for ATP</KM>
    </kinetics>
    <phDependence>
        <text evidence="2">Optimum pH is 8.5.</text>
    </phDependence>
</comment>
<comment type="subunit">
    <text evidence="2">Monomer.</text>
</comment>
<comment type="disruption phenotype">
    <text evidence="3">Mutants show no detectable levels of 2,4-dihydroxyquinoline (DHQ) or other quinolines.</text>
</comment>
<comment type="similarity">
    <text evidence="4">Belongs to the ATP-dependent AMP-binding enzyme family.</text>
</comment>
<organism>
    <name type="scientific">Pseudomonas aeruginosa (strain ATCC 15692 / DSM 22644 / CIP 104116 / JCM 14847 / LMG 12228 / 1C / PRS 101 / PAO1)</name>
    <dbReference type="NCBI Taxonomy" id="208964"/>
    <lineage>
        <taxon>Bacteria</taxon>
        <taxon>Pseudomonadati</taxon>
        <taxon>Pseudomonadota</taxon>
        <taxon>Gammaproteobacteria</taxon>
        <taxon>Pseudomonadales</taxon>
        <taxon>Pseudomonadaceae</taxon>
        <taxon>Pseudomonas</taxon>
    </lineage>
</organism>
<keyword id="KW-0002">3D-structure</keyword>
<keyword id="KW-0067">ATP-binding</keyword>
<keyword id="KW-0436">Ligase</keyword>
<keyword id="KW-0547">Nucleotide-binding</keyword>
<keyword id="KW-1185">Reference proteome</keyword>
<accession>Q9I4X3</accession>
<evidence type="ECO:0000255" key="1"/>
<evidence type="ECO:0000269" key="2">
    <source>
    </source>
</evidence>
<evidence type="ECO:0000269" key="3">
    <source>
    </source>
</evidence>
<evidence type="ECO:0000305" key="4"/>
<evidence type="ECO:0007829" key="5">
    <source>
        <dbReference type="PDB" id="5OE3"/>
    </source>
</evidence>
<evidence type="ECO:0007829" key="6">
    <source>
        <dbReference type="PDB" id="5OE5"/>
    </source>
</evidence>
<evidence type="ECO:0007829" key="7">
    <source>
        <dbReference type="PDB" id="5OE6"/>
    </source>
</evidence>
<gene>
    <name type="primary">pqsA</name>
    <name type="ordered locus">PA0996</name>
</gene>
<feature type="chain" id="PRO_0000418540" description="Anthranilate--CoA ligase">
    <location>
        <begin position="1"/>
        <end position="517"/>
    </location>
</feature>
<feature type="binding site" evidence="1">
    <location>
        <begin position="161"/>
        <end position="172"/>
    </location>
    <ligand>
        <name>AMP</name>
        <dbReference type="ChEBI" id="CHEBI:456215"/>
    </ligand>
</feature>
<feature type="helix" evidence="5">
    <location>
        <begin position="7"/>
        <end position="13"/>
    </location>
</feature>
<feature type="strand" evidence="7">
    <location>
        <begin position="14"/>
        <end position="16"/>
    </location>
</feature>
<feature type="strand" evidence="5">
    <location>
        <begin position="20"/>
        <end position="25"/>
    </location>
</feature>
<feature type="strand" evidence="5">
    <location>
        <begin position="28"/>
        <end position="31"/>
    </location>
</feature>
<feature type="helix" evidence="5">
    <location>
        <begin position="32"/>
        <end position="49"/>
    </location>
</feature>
<feature type="strand" evidence="5">
    <location>
        <begin position="55"/>
        <end position="59"/>
    </location>
</feature>
<feature type="helix" evidence="5">
    <location>
        <begin position="64"/>
        <end position="75"/>
    </location>
</feature>
<feature type="strand" evidence="5">
    <location>
        <begin position="79"/>
        <end position="82"/>
    </location>
</feature>
<feature type="helix" evidence="5">
    <location>
        <begin position="89"/>
        <end position="98"/>
    </location>
</feature>
<feature type="strand" evidence="5">
    <location>
        <begin position="102"/>
        <end position="106"/>
    </location>
</feature>
<feature type="strand" evidence="5">
    <location>
        <begin position="120"/>
        <end position="123"/>
    </location>
</feature>
<feature type="helix" evidence="5">
    <location>
        <begin position="136"/>
        <end position="140"/>
    </location>
</feature>
<feature type="strand" evidence="5">
    <location>
        <begin position="157"/>
        <end position="163"/>
    </location>
</feature>
<feature type="strand" evidence="5">
    <location>
        <begin position="173"/>
        <end position="177"/>
    </location>
</feature>
<feature type="helix" evidence="5">
    <location>
        <begin position="178"/>
        <end position="189"/>
    </location>
</feature>
<feature type="turn" evidence="5">
    <location>
        <begin position="190"/>
        <end position="192"/>
    </location>
</feature>
<feature type="strand" evidence="5">
    <location>
        <begin position="200"/>
        <end position="205"/>
    </location>
</feature>
<feature type="helix" evidence="5">
    <location>
        <begin position="210"/>
        <end position="216"/>
    </location>
</feature>
<feature type="helix" evidence="5">
    <location>
        <begin position="218"/>
        <end position="223"/>
    </location>
</feature>
<feature type="strand" evidence="5">
    <location>
        <begin position="226"/>
        <end position="228"/>
    </location>
</feature>
<feature type="helix" evidence="5">
    <location>
        <begin position="236"/>
        <end position="246"/>
    </location>
</feature>
<feature type="strand" evidence="5">
    <location>
        <begin position="249"/>
        <end position="253"/>
    </location>
</feature>
<feature type="helix" evidence="5">
    <location>
        <begin position="255"/>
        <end position="261"/>
    </location>
</feature>
<feature type="helix" evidence="5">
    <location>
        <begin position="262"/>
        <end position="264"/>
    </location>
</feature>
<feature type="helix" evidence="5">
    <location>
        <begin position="265"/>
        <end position="271"/>
    </location>
</feature>
<feature type="strand" evidence="5">
    <location>
        <begin position="273"/>
        <end position="277"/>
    </location>
</feature>
<feature type="helix" evidence="5">
    <location>
        <begin position="284"/>
        <end position="292"/>
    </location>
</feature>
<feature type="strand" evidence="5">
    <location>
        <begin position="297"/>
        <end position="302"/>
    </location>
</feature>
<feature type="helix" evidence="5">
    <location>
        <begin position="304"/>
        <end position="306"/>
    </location>
</feature>
<feature type="strand" evidence="5">
    <location>
        <begin position="307"/>
        <end position="312"/>
    </location>
</feature>
<feature type="strand" evidence="5">
    <location>
        <begin position="324"/>
        <end position="326"/>
    </location>
</feature>
<feature type="strand" evidence="5">
    <location>
        <begin position="331"/>
        <end position="335"/>
    </location>
</feature>
<feature type="strand" evidence="6">
    <location>
        <begin position="344"/>
        <end position="346"/>
    </location>
</feature>
<feature type="strand" evidence="5">
    <location>
        <begin position="349"/>
        <end position="355"/>
    </location>
</feature>
<feature type="strand" evidence="5">
    <location>
        <begin position="361"/>
        <end position="364"/>
    </location>
</feature>
<feature type="helix" evidence="5">
    <location>
        <begin position="367"/>
        <end position="370"/>
    </location>
</feature>
<feature type="helix" evidence="5">
    <location>
        <begin position="371"/>
        <end position="376"/>
    </location>
</feature>
<feature type="strand" evidence="5">
    <location>
        <begin position="378"/>
        <end position="386"/>
    </location>
</feature>
<feature type="strand" evidence="5">
    <location>
        <begin position="392"/>
        <end position="397"/>
    </location>
</feature>
<name>PQSA_PSEAE</name>
<protein>
    <recommendedName>
        <fullName>Anthranilate--CoA ligase</fullName>
        <ecNumber>6.2.1.32</ecNumber>
    </recommendedName>
</protein>
<dbReference type="EC" id="6.2.1.32"/>
<dbReference type="EMBL" id="AE004091">
    <property type="protein sequence ID" value="AAG04385.1"/>
    <property type="molecule type" value="Genomic_DNA"/>
</dbReference>
<dbReference type="PIR" id="G83521">
    <property type="entry name" value="G83521"/>
</dbReference>
<dbReference type="RefSeq" id="NP_249687.1">
    <property type="nucleotide sequence ID" value="NC_002516.2"/>
</dbReference>
<dbReference type="RefSeq" id="WP_003112552.1">
    <property type="nucleotide sequence ID" value="NZ_QZGE01000006.1"/>
</dbReference>
<dbReference type="PDB" id="5OE3">
    <property type="method" value="X-ray"/>
    <property type="resolution" value="1.43 A"/>
    <property type="chains" value="A/B/C/D=1-399"/>
</dbReference>
<dbReference type="PDB" id="5OE4">
    <property type="method" value="X-ray"/>
    <property type="resolution" value="1.90 A"/>
    <property type="chains" value="A/B=1-399"/>
</dbReference>
<dbReference type="PDB" id="5OE5">
    <property type="method" value="X-ray"/>
    <property type="resolution" value="1.74 A"/>
    <property type="chains" value="A=1-399"/>
</dbReference>
<dbReference type="PDB" id="5OE6">
    <property type="method" value="X-ray"/>
    <property type="resolution" value="1.67 A"/>
    <property type="chains" value="A/B/C/D=1-399"/>
</dbReference>
<dbReference type="PDBsum" id="5OE3"/>
<dbReference type="PDBsum" id="5OE4"/>
<dbReference type="PDBsum" id="5OE5"/>
<dbReference type="PDBsum" id="5OE6"/>
<dbReference type="SMR" id="Q9I4X3"/>
<dbReference type="STRING" id="208964.PA0996"/>
<dbReference type="BindingDB" id="Q9I4X3"/>
<dbReference type="ChEMBL" id="CHEMBL4295626"/>
<dbReference type="PaxDb" id="208964-PA0996"/>
<dbReference type="GeneID" id="880760"/>
<dbReference type="KEGG" id="pae:PA0996"/>
<dbReference type="PATRIC" id="fig|208964.12.peg.1028"/>
<dbReference type="PseudoCAP" id="PA0996"/>
<dbReference type="HOGENOM" id="CLU_000022_59_10_6"/>
<dbReference type="InParanoid" id="Q9I4X3"/>
<dbReference type="OrthoDB" id="9803968at2"/>
<dbReference type="PhylomeDB" id="Q9I4X3"/>
<dbReference type="BioCyc" id="MetaCyc:MONOMER-16009"/>
<dbReference type="BioCyc" id="PAER208964:G1FZ6-1015-MONOMER"/>
<dbReference type="BRENDA" id="6.2.1.32">
    <property type="organism ID" value="5087"/>
</dbReference>
<dbReference type="PHI-base" id="PHI:12086"/>
<dbReference type="PHI-base" id="PHI:3291"/>
<dbReference type="PHI-base" id="PHI:5563"/>
<dbReference type="PHI-base" id="PHI:5585"/>
<dbReference type="Proteomes" id="UP000002438">
    <property type="component" value="Chromosome"/>
</dbReference>
<dbReference type="GO" id="GO:0016878">
    <property type="term" value="F:acid-thiol ligase activity"/>
    <property type="evidence" value="ECO:0000318"/>
    <property type="project" value="GO_Central"/>
</dbReference>
<dbReference type="GO" id="GO:0018860">
    <property type="term" value="F:anthranilate-CoA ligase activity"/>
    <property type="evidence" value="ECO:0000314"/>
    <property type="project" value="UniProtKB"/>
</dbReference>
<dbReference type="GO" id="GO:0005524">
    <property type="term" value="F:ATP binding"/>
    <property type="evidence" value="ECO:0007669"/>
    <property type="project" value="UniProtKB-KW"/>
</dbReference>
<dbReference type="GO" id="GO:0044550">
    <property type="term" value="P:secondary metabolite biosynthetic process"/>
    <property type="evidence" value="ECO:0000315"/>
    <property type="project" value="PseudoCAP"/>
</dbReference>
<dbReference type="CDD" id="cd05919">
    <property type="entry name" value="BCL_like"/>
    <property type="match status" value="1"/>
</dbReference>
<dbReference type="Gene3D" id="3.30.300.30">
    <property type="match status" value="1"/>
</dbReference>
<dbReference type="Gene3D" id="3.40.50.12780">
    <property type="entry name" value="N-terminal domain of ligase-like"/>
    <property type="match status" value="1"/>
</dbReference>
<dbReference type="InterPro" id="IPR025110">
    <property type="entry name" value="AMP-bd_C"/>
</dbReference>
<dbReference type="InterPro" id="IPR045851">
    <property type="entry name" value="AMP-bd_C_sf"/>
</dbReference>
<dbReference type="InterPro" id="IPR020845">
    <property type="entry name" value="AMP-binding_CS"/>
</dbReference>
<dbReference type="InterPro" id="IPR000873">
    <property type="entry name" value="AMP-dep_synth/lig_dom"/>
</dbReference>
<dbReference type="InterPro" id="IPR042099">
    <property type="entry name" value="ANL_N_sf"/>
</dbReference>
<dbReference type="PANTHER" id="PTHR43352">
    <property type="entry name" value="ACETYL-COA SYNTHETASE"/>
    <property type="match status" value="1"/>
</dbReference>
<dbReference type="PANTHER" id="PTHR43352:SF1">
    <property type="entry name" value="ANTHRANILATE--COA LIGASE"/>
    <property type="match status" value="1"/>
</dbReference>
<dbReference type="Pfam" id="PF00501">
    <property type="entry name" value="AMP-binding"/>
    <property type="match status" value="1"/>
</dbReference>
<dbReference type="Pfam" id="PF13193">
    <property type="entry name" value="AMP-binding_C"/>
    <property type="match status" value="1"/>
</dbReference>
<dbReference type="SUPFAM" id="SSF56801">
    <property type="entry name" value="Acetyl-CoA synthetase-like"/>
    <property type="match status" value="1"/>
</dbReference>
<dbReference type="PROSITE" id="PS00455">
    <property type="entry name" value="AMP_BINDING"/>
    <property type="match status" value="1"/>
</dbReference>